<evidence type="ECO:0000255" key="1">
    <source>
        <dbReference type="HAMAP-Rule" id="MF_01209"/>
    </source>
</evidence>
<sequence>MKRQLILEDGTVLIGTGFGGEIEKSGEVVFTTGMTGYQETLSDPSYCGQIVTFTYPLIGNYGINRDDFESIHPSVNGLIVNEICDHPSNFRNEISLNDYLKERNIPGLAGIDTRKLTRKIRQYGTLRGRLCNMDADVEYIVSQLKATVFTDHVKRVSTKDPYPSPGRGHRVVLVDFGMKHGILRELNKRDCDVIVVPYNTTAEEILRLSPDGIMLSNGPGDPKDVPEAIEMLKDIIGKVPLFGICLGHQLFALASGANTSKLKFGHRGLNHPVKNIATGKVAITSQNHGYAVEEESVENTELEITHVALNDGTVEGLRHKKFPAFTVQYHPEASAGPEDANDLFEDFLTMIENFKKEGEELCQNA</sequence>
<proteinExistence type="inferred from homology"/>
<accession>Q81WF1</accession>
<accession>Q6HUJ9</accession>
<accession>Q6KNT4</accession>
<name>CARA_BACAN</name>
<keyword id="KW-0028">Amino-acid biosynthesis</keyword>
<keyword id="KW-0055">Arginine biosynthesis</keyword>
<keyword id="KW-0067">ATP-binding</keyword>
<keyword id="KW-0315">Glutamine amidotransferase</keyword>
<keyword id="KW-0436">Ligase</keyword>
<keyword id="KW-0547">Nucleotide-binding</keyword>
<keyword id="KW-0665">Pyrimidine biosynthesis</keyword>
<keyword id="KW-1185">Reference proteome</keyword>
<gene>
    <name evidence="1" type="primary">carA</name>
    <name type="ordered locus">BA_4026</name>
    <name type="ordered locus">GBAA_4026</name>
    <name type="ordered locus">BAS3738</name>
</gene>
<comment type="function">
    <text evidence="1">Small subunit of the glutamine-dependent carbamoyl phosphate synthetase (CPSase). CPSase catalyzes the formation of carbamoyl phosphate from the ammonia moiety of glutamine, carbonate, and phosphate donated by ATP, constituting the first step of 2 biosynthetic pathways, one leading to arginine and/or urea and the other to pyrimidine nucleotides. The small subunit (glutamine amidotransferase) binds and cleaves glutamine to supply the large subunit with the substrate ammonia.</text>
</comment>
<comment type="catalytic activity">
    <reaction evidence="1">
        <text>hydrogencarbonate + L-glutamine + 2 ATP + H2O = carbamoyl phosphate + L-glutamate + 2 ADP + phosphate + 2 H(+)</text>
        <dbReference type="Rhea" id="RHEA:18633"/>
        <dbReference type="ChEBI" id="CHEBI:15377"/>
        <dbReference type="ChEBI" id="CHEBI:15378"/>
        <dbReference type="ChEBI" id="CHEBI:17544"/>
        <dbReference type="ChEBI" id="CHEBI:29985"/>
        <dbReference type="ChEBI" id="CHEBI:30616"/>
        <dbReference type="ChEBI" id="CHEBI:43474"/>
        <dbReference type="ChEBI" id="CHEBI:58228"/>
        <dbReference type="ChEBI" id="CHEBI:58359"/>
        <dbReference type="ChEBI" id="CHEBI:456216"/>
        <dbReference type="EC" id="6.3.5.5"/>
    </reaction>
</comment>
<comment type="catalytic activity">
    <molecule>Carbamoyl phosphate synthase small chain</molecule>
    <reaction evidence="1">
        <text>L-glutamine + H2O = L-glutamate + NH4(+)</text>
        <dbReference type="Rhea" id="RHEA:15889"/>
        <dbReference type="ChEBI" id="CHEBI:15377"/>
        <dbReference type="ChEBI" id="CHEBI:28938"/>
        <dbReference type="ChEBI" id="CHEBI:29985"/>
        <dbReference type="ChEBI" id="CHEBI:58359"/>
    </reaction>
</comment>
<comment type="pathway">
    <text evidence="1">Amino-acid biosynthesis; L-arginine biosynthesis; carbamoyl phosphate from bicarbonate: step 1/1.</text>
</comment>
<comment type="pathway">
    <text evidence="1">Pyrimidine metabolism; UMP biosynthesis via de novo pathway; (S)-dihydroorotate from bicarbonate: step 1/3.</text>
</comment>
<comment type="subunit">
    <text evidence="1">Composed of two chains; the small (or glutamine) chain promotes the hydrolysis of glutamine to ammonia, which is used by the large (or ammonia) chain to synthesize carbamoyl phosphate. Tetramer of heterodimers (alpha,beta)4.</text>
</comment>
<comment type="similarity">
    <text evidence="1">Belongs to the CarA family.</text>
</comment>
<feature type="chain" id="PRO_0000112246" description="Carbamoyl phosphate synthase small chain">
    <location>
        <begin position="1"/>
        <end position="365"/>
    </location>
</feature>
<feature type="domain" description="Glutamine amidotransferase type-1" evidence="1">
    <location>
        <begin position="170"/>
        <end position="357"/>
    </location>
</feature>
<feature type="region of interest" description="CPSase" evidence="1">
    <location>
        <begin position="1"/>
        <end position="169"/>
    </location>
</feature>
<feature type="region of interest" description="CPSase">
    <location>
        <begin position="1"/>
        <end position="166"/>
    </location>
</feature>
<feature type="active site" description="Nucleophile" evidence="1">
    <location>
        <position position="245"/>
    </location>
</feature>
<feature type="active site" evidence="1">
    <location>
        <position position="330"/>
    </location>
</feature>
<feature type="active site" evidence="1">
    <location>
        <position position="332"/>
    </location>
</feature>
<feature type="binding site" evidence="1">
    <location>
        <position position="45"/>
    </location>
    <ligand>
        <name>L-glutamine</name>
        <dbReference type="ChEBI" id="CHEBI:58359"/>
    </ligand>
</feature>
<feature type="binding site" evidence="1">
    <location>
        <position position="218"/>
    </location>
    <ligand>
        <name>L-glutamine</name>
        <dbReference type="ChEBI" id="CHEBI:58359"/>
    </ligand>
</feature>
<feature type="binding site" evidence="1">
    <location>
        <position position="220"/>
    </location>
    <ligand>
        <name>L-glutamine</name>
        <dbReference type="ChEBI" id="CHEBI:58359"/>
    </ligand>
</feature>
<feature type="binding site" evidence="1">
    <location>
        <position position="246"/>
    </location>
    <ligand>
        <name>L-glutamine</name>
        <dbReference type="ChEBI" id="CHEBI:58359"/>
    </ligand>
</feature>
<feature type="binding site" evidence="1">
    <location>
        <position position="249"/>
    </location>
    <ligand>
        <name>L-glutamine</name>
        <dbReference type="ChEBI" id="CHEBI:58359"/>
    </ligand>
</feature>
<feature type="binding site" evidence="1">
    <location>
        <position position="287"/>
    </location>
    <ligand>
        <name>L-glutamine</name>
        <dbReference type="ChEBI" id="CHEBI:58359"/>
    </ligand>
</feature>
<feature type="binding site" evidence="1">
    <location>
        <position position="289"/>
    </location>
    <ligand>
        <name>L-glutamine</name>
        <dbReference type="ChEBI" id="CHEBI:58359"/>
    </ligand>
</feature>
<feature type="binding site" evidence="1">
    <location>
        <position position="290"/>
    </location>
    <ligand>
        <name>L-glutamine</name>
        <dbReference type="ChEBI" id="CHEBI:58359"/>
    </ligand>
</feature>
<protein>
    <recommendedName>
        <fullName evidence="1">Carbamoyl phosphate synthase small chain</fullName>
        <ecNumber evidence="1">6.3.5.5</ecNumber>
    </recommendedName>
    <alternativeName>
        <fullName evidence="1">Carbamoyl phosphate synthetase glutamine chain</fullName>
    </alternativeName>
</protein>
<reference key="1">
    <citation type="journal article" date="2003" name="Nature">
        <title>The genome sequence of Bacillus anthracis Ames and comparison to closely related bacteria.</title>
        <authorList>
            <person name="Read T.D."/>
            <person name="Peterson S.N."/>
            <person name="Tourasse N.J."/>
            <person name="Baillie L.W."/>
            <person name="Paulsen I.T."/>
            <person name="Nelson K.E."/>
            <person name="Tettelin H."/>
            <person name="Fouts D.E."/>
            <person name="Eisen J.A."/>
            <person name="Gill S.R."/>
            <person name="Holtzapple E.K."/>
            <person name="Okstad O.A."/>
            <person name="Helgason E."/>
            <person name="Rilstone J."/>
            <person name="Wu M."/>
            <person name="Kolonay J.F."/>
            <person name="Beanan M.J."/>
            <person name="Dodson R.J."/>
            <person name="Brinkac L.M."/>
            <person name="Gwinn M.L."/>
            <person name="DeBoy R.T."/>
            <person name="Madpu R."/>
            <person name="Daugherty S.C."/>
            <person name="Durkin A.S."/>
            <person name="Haft D.H."/>
            <person name="Nelson W.C."/>
            <person name="Peterson J.D."/>
            <person name="Pop M."/>
            <person name="Khouri H.M."/>
            <person name="Radune D."/>
            <person name="Benton J.L."/>
            <person name="Mahamoud Y."/>
            <person name="Jiang L."/>
            <person name="Hance I.R."/>
            <person name="Weidman J.F."/>
            <person name="Berry K.J."/>
            <person name="Plaut R.D."/>
            <person name="Wolf A.M."/>
            <person name="Watkins K.L."/>
            <person name="Nierman W.C."/>
            <person name="Hazen A."/>
            <person name="Cline R.T."/>
            <person name="Redmond C."/>
            <person name="Thwaite J.E."/>
            <person name="White O."/>
            <person name="Salzberg S.L."/>
            <person name="Thomason B."/>
            <person name="Friedlander A.M."/>
            <person name="Koehler T.M."/>
            <person name="Hanna P.C."/>
            <person name="Kolstoe A.-B."/>
            <person name="Fraser C.M."/>
        </authorList>
    </citation>
    <scope>NUCLEOTIDE SEQUENCE [LARGE SCALE GENOMIC DNA]</scope>
    <source>
        <strain>Ames / isolate Porton</strain>
    </source>
</reference>
<reference key="2">
    <citation type="journal article" date="2009" name="J. Bacteriol.">
        <title>The complete genome sequence of Bacillus anthracis Ames 'Ancestor'.</title>
        <authorList>
            <person name="Ravel J."/>
            <person name="Jiang L."/>
            <person name="Stanley S.T."/>
            <person name="Wilson M.R."/>
            <person name="Decker R.S."/>
            <person name="Read T.D."/>
            <person name="Worsham P."/>
            <person name="Keim P.S."/>
            <person name="Salzberg S.L."/>
            <person name="Fraser-Liggett C.M."/>
            <person name="Rasko D.A."/>
        </authorList>
    </citation>
    <scope>NUCLEOTIDE SEQUENCE [LARGE SCALE GENOMIC DNA]</scope>
    <source>
        <strain>Ames ancestor</strain>
    </source>
</reference>
<reference key="3">
    <citation type="submission" date="2004-01" db="EMBL/GenBank/DDBJ databases">
        <title>Complete genome sequence of Bacillus anthracis Sterne.</title>
        <authorList>
            <person name="Brettin T.S."/>
            <person name="Bruce D."/>
            <person name="Challacombe J.F."/>
            <person name="Gilna P."/>
            <person name="Han C."/>
            <person name="Hill K."/>
            <person name="Hitchcock P."/>
            <person name="Jackson P."/>
            <person name="Keim P."/>
            <person name="Longmire J."/>
            <person name="Lucas S."/>
            <person name="Okinaka R."/>
            <person name="Richardson P."/>
            <person name="Rubin E."/>
            <person name="Tice H."/>
        </authorList>
    </citation>
    <scope>NUCLEOTIDE SEQUENCE [LARGE SCALE GENOMIC DNA]</scope>
    <source>
        <strain>Sterne</strain>
    </source>
</reference>
<dbReference type="EC" id="6.3.5.5" evidence="1"/>
<dbReference type="EMBL" id="AE016879">
    <property type="protein sequence ID" value="AAP27753.1"/>
    <property type="molecule type" value="Genomic_DNA"/>
</dbReference>
<dbReference type="EMBL" id="AE017334">
    <property type="protein sequence ID" value="AAT33143.1"/>
    <property type="molecule type" value="Genomic_DNA"/>
</dbReference>
<dbReference type="EMBL" id="AE017225">
    <property type="protein sequence ID" value="AAT56040.1"/>
    <property type="molecule type" value="Genomic_DNA"/>
</dbReference>
<dbReference type="RefSeq" id="NP_846267.1">
    <property type="nucleotide sequence ID" value="NC_003997.3"/>
</dbReference>
<dbReference type="RefSeq" id="WP_000828679.1">
    <property type="nucleotide sequence ID" value="NZ_WXXJ01000026.1"/>
</dbReference>
<dbReference type="RefSeq" id="YP_029989.1">
    <property type="nucleotide sequence ID" value="NC_005945.1"/>
</dbReference>
<dbReference type="SMR" id="Q81WF1"/>
<dbReference type="STRING" id="261594.GBAA_4026"/>
<dbReference type="MEROPS" id="C26.A33"/>
<dbReference type="DNASU" id="1086653"/>
<dbReference type="GeneID" id="45023716"/>
<dbReference type="KEGG" id="ban:BA_4026"/>
<dbReference type="KEGG" id="banh:HYU01_19680"/>
<dbReference type="KEGG" id="bar:GBAA_4026"/>
<dbReference type="KEGG" id="bat:BAS3738"/>
<dbReference type="PATRIC" id="fig|198094.11.peg.3997"/>
<dbReference type="eggNOG" id="COG0505">
    <property type="taxonomic scope" value="Bacteria"/>
</dbReference>
<dbReference type="HOGENOM" id="CLU_035901_2_1_9"/>
<dbReference type="OMA" id="CFSVQYH"/>
<dbReference type="OrthoDB" id="9804328at2"/>
<dbReference type="UniPathway" id="UPA00068">
    <property type="reaction ID" value="UER00171"/>
</dbReference>
<dbReference type="UniPathway" id="UPA00070">
    <property type="reaction ID" value="UER00115"/>
</dbReference>
<dbReference type="Proteomes" id="UP000000427">
    <property type="component" value="Chromosome"/>
</dbReference>
<dbReference type="Proteomes" id="UP000000594">
    <property type="component" value="Chromosome"/>
</dbReference>
<dbReference type="GO" id="GO:0005524">
    <property type="term" value="F:ATP binding"/>
    <property type="evidence" value="ECO:0007669"/>
    <property type="project" value="UniProtKB-UniRule"/>
</dbReference>
<dbReference type="GO" id="GO:0004088">
    <property type="term" value="F:carbamoyl-phosphate synthase (glutamine-hydrolyzing) activity"/>
    <property type="evidence" value="ECO:0007669"/>
    <property type="project" value="UniProtKB-UniRule"/>
</dbReference>
<dbReference type="GO" id="GO:0004359">
    <property type="term" value="F:glutaminase activity"/>
    <property type="evidence" value="ECO:0007669"/>
    <property type="project" value="RHEA"/>
</dbReference>
<dbReference type="GO" id="GO:0006207">
    <property type="term" value="P:'de novo' pyrimidine nucleobase biosynthetic process"/>
    <property type="evidence" value="ECO:0007669"/>
    <property type="project" value="InterPro"/>
</dbReference>
<dbReference type="GO" id="GO:0044205">
    <property type="term" value="P:'de novo' UMP biosynthetic process"/>
    <property type="evidence" value="ECO:0007669"/>
    <property type="project" value="UniProtKB-UniRule"/>
</dbReference>
<dbReference type="GO" id="GO:0006541">
    <property type="term" value="P:glutamine metabolic process"/>
    <property type="evidence" value="ECO:0007669"/>
    <property type="project" value="InterPro"/>
</dbReference>
<dbReference type="GO" id="GO:0006526">
    <property type="term" value="P:L-arginine biosynthetic process"/>
    <property type="evidence" value="ECO:0007669"/>
    <property type="project" value="UniProtKB-UniRule"/>
</dbReference>
<dbReference type="CDD" id="cd01744">
    <property type="entry name" value="GATase1_CPSase"/>
    <property type="match status" value="1"/>
</dbReference>
<dbReference type="FunFam" id="3.40.50.880:FF:000029">
    <property type="entry name" value="Carbamoyl-phosphate synthase small chain"/>
    <property type="match status" value="1"/>
</dbReference>
<dbReference type="FunFam" id="3.50.30.20:FF:000001">
    <property type="entry name" value="Carbamoyl-phosphate synthase small chain"/>
    <property type="match status" value="1"/>
</dbReference>
<dbReference type="Gene3D" id="3.40.50.880">
    <property type="match status" value="1"/>
</dbReference>
<dbReference type="Gene3D" id="3.50.30.20">
    <property type="entry name" value="Carbamoyl-phosphate synthase small subunit, N-terminal domain"/>
    <property type="match status" value="1"/>
</dbReference>
<dbReference type="HAMAP" id="MF_01209">
    <property type="entry name" value="CPSase_S_chain"/>
    <property type="match status" value="1"/>
</dbReference>
<dbReference type="InterPro" id="IPR050472">
    <property type="entry name" value="Anth_synth/Amidotransfase"/>
</dbReference>
<dbReference type="InterPro" id="IPR006274">
    <property type="entry name" value="CarbamoylP_synth_ssu"/>
</dbReference>
<dbReference type="InterPro" id="IPR002474">
    <property type="entry name" value="CarbamoylP_synth_ssu_N"/>
</dbReference>
<dbReference type="InterPro" id="IPR036480">
    <property type="entry name" value="CarbP_synth_ssu_N_sf"/>
</dbReference>
<dbReference type="InterPro" id="IPR029062">
    <property type="entry name" value="Class_I_gatase-like"/>
</dbReference>
<dbReference type="InterPro" id="IPR035686">
    <property type="entry name" value="CPSase_GATase1"/>
</dbReference>
<dbReference type="InterPro" id="IPR017926">
    <property type="entry name" value="GATASE"/>
</dbReference>
<dbReference type="NCBIfam" id="TIGR01368">
    <property type="entry name" value="CPSaseIIsmall"/>
    <property type="match status" value="1"/>
</dbReference>
<dbReference type="NCBIfam" id="NF009475">
    <property type="entry name" value="PRK12838.1"/>
    <property type="match status" value="1"/>
</dbReference>
<dbReference type="PANTHER" id="PTHR43418:SF7">
    <property type="entry name" value="CARBAMOYL-PHOSPHATE SYNTHASE SMALL CHAIN"/>
    <property type="match status" value="1"/>
</dbReference>
<dbReference type="PANTHER" id="PTHR43418">
    <property type="entry name" value="MULTIFUNCTIONAL TRYPTOPHAN BIOSYNTHESIS PROTEIN-RELATED"/>
    <property type="match status" value="1"/>
</dbReference>
<dbReference type="Pfam" id="PF00988">
    <property type="entry name" value="CPSase_sm_chain"/>
    <property type="match status" value="1"/>
</dbReference>
<dbReference type="Pfam" id="PF00117">
    <property type="entry name" value="GATase"/>
    <property type="match status" value="1"/>
</dbReference>
<dbReference type="PRINTS" id="PR00097">
    <property type="entry name" value="ANTSNTHASEII"/>
</dbReference>
<dbReference type="PRINTS" id="PR00099">
    <property type="entry name" value="CPSGATASE"/>
</dbReference>
<dbReference type="PRINTS" id="PR00096">
    <property type="entry name" value="GATASE"/>
</dbReference>
<dbReference type="SMART" id="SM01097">
    <property type="entry name" value="CPSase_sm_chain"/>
    <property type="match status" value="1"/>
</dbReference>
<dbReference type="SUPFAM" id="SSF52021">
    <property type="entry name" value="Carbamoyl phosphate synthetase, small subunit N-terminal domain"/>
    <property type="match status" value="1"/>
</dbReference>
<dbReference type="SUPFAM" id="SSF52317">
    <property type="entry name" value="Class I glutamine amidotransferase-like"/>
    <property type="match status" value="1"/>
</dbReference>
<dbReference type="PROSITE" id="PS51273">
    <property type="entry name" value="GATASE_TYPE_1"/>
    <property type="match status" value="1"/>
</dbReference>
<organism>
    <name type="scientific">Bacillus anthracis</name>
    <dbReference type="NCBI Taxonomy" id="1392"/>
    <lineage>
        <taxon>Bacteria</taxon>
        <taxon>Bacillati</taxon>
        <taxon>Bacillota</taxon>
        <taxon>Bacilli</taxon>
        <taxon>Bacillales</taxon>
        <taxon>Bacillaceae</taxon>
        <taxon>Bacillus</taxon>
        <taxon>Bacillus cereus group</taxon>
    </lineage>
</organism>